<protein>
    <recommendedName>
        <fullName>Chaperone SurA</fullName>
    </recommendedName>
    <alternativeName>
        <fullName>Peptidyl-prolyl cis-trans isomerase SurA</fullName>
        <shortName>PPIase SurA</shortName>
        <ecNumber>5.2.1.8</ecNumber>
    </alternativeName>
    <alternativeName>
        <fullName>Rotamase SurA</fullName>
    </alternativeName>
</protein>
<sequence length="430" mass="50738">MKICIFIFFYIFSSIFYVLAKNNQVDNITAIVNDEIILNSDVNEILVFLKKSKKKFIIPLKSDFLKEKVLEKLIVDSLILQEANSKNINITKEQIDTVIKNIALKKHISVDHFKKQILLRNIKNPSYYDNFIKKIEILLKMKTIQDYELHKRINISEQEVNTIFKKLIKDNEKFKKINLSYILLPSLKQDSDNAVRNRTKIAENIVYKLKKGYDFEKLLIECEKNKSTFIVKKMFWKPLLDIQNSFFKTLNIFKKGQILGPIVGDKGLYILKVNDIHHKKENIVTEFYMQHCLIKPSVILTNTEAKKKIFNIYENIKKGIYTFDDAVKNLSDDYYSSNKKGDLGWISKESLGFDLNKKFLILDKNEISEPVKSNWGWHIFKILDRRQVDAFYKLKKNQAFNIVLNQKIISEKNHWIEDLKNTAYIEIIRS</sequence>
<accession>P57240</accession>
<proteinExistence type="inferred from homology"/>
<name>SURA_BUCAI</name>
<keyword id="KW-0143">Chaperone</keyword>
<keyword id="KW-0413">Isomerase</keyword>
<keyword id="KW-0574">Periplasm</keyword>
<keyword id="KW-1185">Reference proteome</keyword>
<keyword id="KW-0677">Repeat</keyword>
<keyword id="KW-0697">Rotamase</keyword>
<keyword id="KW-0732">Signal</keyword>
<reference key="1">
    <citation type="journal article" date="2000" name="Nature">
        <title>Genome sequence of the endocellular bacterial symbiont of aphids Buchnera sp. APS.</title>
        <authorList>
            <person name="Shigenobu S."/>
            <person name="Watanabe H."/>
            <person name="Hattori M."/>
            <person name="Sakaki Y."/>
            <person name="Ishikawa H."/>
        </authorList>
    </citation>
    <scope>NUCLEOTIDE SEQUENCE [LARGE SCALE GENOMIC DNA]</scope>
    <source>
        <strain>APS</strain>
    </source>
</reference>
<organism>
    <name type="scientific">Buchnera aphidicola subsp. Acyrthosiphon pisum (strain APS)</name>
    <name type="common">Acyrthosiphon pisum symbiotic bacterium</name>
    <dbReference type="NCBI Taxonomy" id="107806"/>
    <lineage>
        <taxon>Bacteria</taxon>
        <taxon>Pseudomonadati</taxon>
        <taxon>Pseudomonadota</taxon>
        <taxon>Gammaproteobacteria</taxon>
        <taxon>Enterobacterales</taxon>
        <taxon>Erwiniaceae</taxon>
        <taxon>Buchnera</taxon>
    </lineage>
</organism>
<gene>
    <name type="primary">surA</name>
    <name type="ordered locus">BU140</name>
</gene>
<comment type="function">
    <text evidence="1">Chaperone involved in the correct folding and assembly of outer membrane proteins. Recognizes specific patterns of aromatic residues and the orientation of their side chains, which are found more frequently in integral outer membrane proteins. May act in both early periplasmic and late outer membrane-associated steps of protein maturation (By similarity).</text>
</comment>
<comment type="catalytic activity">
    <reaction>
        <text>[protein]-peptidylproline (omega=180) = [protein]-peptidylproline (omega=0)</text>
        <dbReference type="Rhea" id="RHEA:16237"/>
        <dbReference type="Rhea" id="RHEA-COMP:10747"/>
        <dbReference type="Rhea" id="RHEA-COMP:10748"/>
        <dbReference type="ChEBI" id="CHEBI:83833"/>
        <dbReference type="ChEBI" id="CHEBI:83834"/>
        <dbReference type="EC" id="5.2.1.8"/>
    </reaction>
</comment>
<comment type="subcellular location">
    <subcellularLocation>
        <location evidence="1">Periplasm</location>
    </subcellularLocation>
    <text evidence="1">Is capable of associating with the outer membrane.</text>
</comment>
<comment type="domain">
    <text evidence="1">The PPIase activity resides only in the second parvulin domain. The N-terminal region and the C-terminal tail are necessary and sufficient for the chaperone activity of SurA. The PPIase activity is dispensable for SurA to function as a chaperone. The N-terminal region and the C-terminal tail are also required for porin recognition (By similarity).</text>
</comment>
<evidence type="ECO:0000250" key="1"/>
<evidence type="ECO:0000255" key="2"/>
<dbReference type="EC" id="5.2.1.8"/>
<dbReference type="EMBL" id="BA000003">
    <property type="protein sequence ID" value="BAB12858.1"/>
    <property type="molecule type" value="Genomic_DNA"/>
</dbReference>
<dbReference type="RefSeq" id="NP_239972.1">
    <property type="nucleotide sequence ID" value="NC_002528.1"/>
</dbReference>
<dbReference type="RefSeq" id="WP_010895967.1">
    <property type="nucleotide sequence ID" value="NC_002528.1"/>
</dbReference>
<dbReference type="SMR" id="P57240"/>
<dbReference type="STRING" id="563178.BUAP5A_138"/>
<dbReference type="EnsemblBacteria" id="BAB12858">
    <property type="protein sequence ID" value="BAB12858"/>
    <property type="gene ID" value="BAB12858"/>
</dbReference>
<dbReference type="KEGG" id="buc:BU140"/>
<dbReference type="PATRIC" id="fig|107806.10.peg.149"/>
<dbReference type="eggNOG" id="COG0760">
    <property type="taxonomic scope" value="Bacteria"/>
</dbReference>
<dbReference type="HOGENOM" id="CLU_034646_11_0_6"/>
<dbReference type="Proteomes" id="UP000001806">
    <property type="component" value="Chromosome"/>
</dbReference>
<dbReference type="GO" id="GO:0030288">
    <property type="term" value="C:outer membrane-bounded periplasmic space"/>
    <property type="evidence" value="ECO:0007669"/>
    <property type="project" value="InterPro"/>
</dbReference>
<dbReference type="GO" id="GO:0042277">
    <property type="term" value="F:peptide binding"/>
    <property type="evidence" value="ECO:0007669"/>
    <property type="project" value="InterPro"/>
</dbReference>
<dbReference type="GO" id="GO:0003755">
    <property type="term" value="F:peptidyl-prolyl cis-trans isomerase activity"/>
    <property type="evidence" value="ECO:0007669"/>
    <property type="project" value="UniProtKB-UniRule"/>
</dbReference>
<dbReference type="GO" id="GO:0051082">
    <property type="term" value="F:unfolded protein binding"/>
    <property type="evidence" value="ECO:0007669"/>
    <property type="project" value="UniProtKB-UniRule"/>
</dbReference>
<dbReference type="GO" id="GO:0043165">
    <property type="term" value="P:Gram-negative-bacterium-type cell outer membrane assembly"/>
    <property type="evidence" value="ECO:0007669"/>
    <property type="project" value="InterPro"/>
</dbReference>
<dbReference type="GO" id="GO:0006457">
    <property type="term" value="P:protein folding"/>
    <property type="evidence" value="ECO:0007669"/>
    <property type="project" value="UniProtKB-UniRule"/>
</dbReference>
<dbReference type="GO" id="GO:0050821">
    <property type="term" value="P:protein stabilization"/>
    <property type="evidence" value="ECO:0007669"/>
    <property type="project" value="InterPro"/>
</dbReference>
<dbReference type="Gene3D" id="3.10.50.40">
    <property type="match status" value="2"/>
</dbReference>
<dbReference type="Gene3D" id="1.10.4030.10">
    <property type="entry name" value="Porin chaperone SurA, peptide-binding domain"/>
    <property type="match status" value="1"/>
</dbReference>
<dbReference type="HAMAP" id="MF_01183">
    <property type="entry name" value="Chaperone_SurA"/>
    <property type="match status" value="1"/>
</dbReference>
<dbReference type="InterPro" id="IPR050280">
    <property type="entry name" value="OMP_Chaperone_SurA"/>
</dbReference>
<dbReference type="InterPro" id="IPR046357">
    <property type="entry name" value="PPIase_dom_sf"/>
</dbReference>
<dbReference type="InterPro" id="IPR000297">
    <property type="entry name" value="PPIase_PpiC"/>
</dbReference>
<dbReference type="InterPro" id="IPR023034">
    <property type="entry name" value="PPIase_SurA"/>
</dbReference>
<dbReference type="InterPro" id="IPR015391">
    <property type="entry name" value="SurA_N"/>
</dbReference>
<dbReference type="InterPro" id="IPR027304">
    <property type="entry name" value="Trigger_fact/SurA_dom_sf"/>
</dbReference>
<dbReference type="PANTHER" id="PTHR47637">
    <property type="entry name" value="CHAPERONE SURA"/>
    <property type="match status" value="1"/>
</dbReference>
<dbReference type="PANTHER" id="PTHR47637:SF1">
    <property type="entry name" value="CHAPERONE SURA"/>
    <property type="match status" value="1"/>
</dbReference>
<dbReference type="Pfam" id="PF00639">
    <property type="entry name" value="Rotamase"/>
    <property type="match status" value="1"/>
</dbReference>
<dbReference type="Pfam" id="PF13616">
    <property type="entry name" value="Rotamase_3"/>
    <property type="match status" value="1"/>
</dbReference>
<dbReference type="Pfam" id="PF09312">
    <property type="entry name" value="SurA_N"/>
    <property type="match status" value="1"/>
</dbReference>
<dbReference type="SUPFAM" id="SSF54534">
    <property type="entry name" value="FKBP-like"/>
    <property type="match status" value="2"/>
</dbReference>
<dbReference type="SUPFAM" id="SSF109998">
    <property type="entry name" value="Triger factor/SurA peptide-binding domain-like"/>
    <property type="match status" value="1"/>
</dbReference>
<dbReference type="PROSITE" id="PS50198">
    <property type="entry name" value="PPIC_PPIASE_2"/>
    <property type="match status" value="2"/>
</dbReference>
<feature type="signal peptide" evidence="2">
    <location>
        <begin position="1"/>
        <end position="20"/>
    </location>
</feature>
<feature type="chain" id="PRO_0000025540" description="Chaperone SurA">
    <location>
        <begin position="21"/>
        <end position="430"/>
    </location>
</feature>
<feature type="domain" description="PpiC 1">
    <location>
        <begin position="174"/>
        <end position="275"/>
    </location>
</feature>
<feature type="domain" description="PpiC 2">
    <location>
        <begin position="284"/>
        <end position="384"/>
    </location>
</feature>